<organism>
    <name type="scientific">Methanoculleus marisnigri (strain ATCC 35101 / DSM 1498 / JR1)</name>
    <dbReference type="NCBI Taxonomy" id="368407"/>
    <lineage>
        <taxon>Archaea</taxon>
        <taxon>Methanobacteriati</taxon>
        <taxon>Methanobacteriota</taxon>
        <taxon>Stenosarchaea group</taxon>
        <taxon>Methanomicrobia</taxon>
        <taxon>Methanomicrobiales</taxon>
        <taxon>Methanomicrobiaceae</taxon>
        <taxon>Methanoculleus</taxon>
    </lineage>
</organism>
<reference key="1">
    <citation type="journal article" date="2009" name="Stand. Genomic Sci.">
        <title>Complete genome sequence of Methanoculleus marisnigri Romesser et al. 1981 type strain JR1.</title>
        <authorList>
            <person name="Anderson I.J."/>
            <person name="Sieprawska-Lupa M."/>
            <person name="Lapidus A."/>
            <person name="Nolan M."/>
            <person name="Copeland A."/>
            <person name="Glavina Del Rio T."/>
            <person name="Tice H."/>
            <person name="Dalin E."/>
            <person name="Barry K."/>
            <person name="Saunders E."/>
            <person name="Han C."/>
            <person name="Brettin T."/>
            <person name="Detter J.C."/>
            <person name="Bruce D."/>
            <person name="Mikhailova N."/>
            <person name="Pitluck S."/>
            <person name="Hauser L."/>
            <person name="Land M."/>
            <person name="Lucas S."/>
            <person name="Richardson P."/>
            <person name="Whitman W.B."/>
            <person name="Kyrpides N.C."/>
        </authorList>
    </citation>
    <scope>NUCLEOTIDE SEQUENCE [LARGE SCALE GENOMIC DNA]</scope>
    <source>
        <strain>ATCC 35101 / DSM 1498 / JR1</strain>
    </source>
</reference>
<name>SYP_METMJ</name>
<feature type="chain" id="PRO_0000288421" description="Proline--tRNA ligase">
    <location>
        <begin position="1"/>
        <end position="477"/>
    </location>
</feature>
<dbReference type="EC" id="6.1.1.15" evidence="1"/>
<dbReference type="EMBL" id="CP000562">
    <property type="protein sequence ID" value="ABN57968.1"/>
    <property type="molecule type" value="Genomic_DNA"/>
</dbReference>
<dbReference type="RefSeq" id="WP_011844877.1">
    <property type="nucleotide sequence ID" value="NC_009051.1"/>
</dbReference>
<dbReference type="SMR" id="A3CX68"/>
<dbReference type="STRING" id="368407.Memar_2042"/>
<dbReference type="GeneID" id="4847873"/>
<dbReference type="GeneID" id="76730122"/>
<dbReference type="KEGG" id="mem:Memar_2042"/>
<dbReference type="eggNOG" id="arCOG00402">
    <property type="taxonomic scope" value="Archaea"/>
</dbReference>
<dbReference type="HOGENOM" id="CLU_001882_4_2_2"/>
<dbReference type="OrthoDB" id="7375at2157"/>
<dbReference type="Proteomes" id="UP000002146">
    <property type="component" value="Chromosome"/>
</dbReference>
<dbReference type="GO" id="GO:0017101">
    <property type="term" value="C:aminoacyl-tRNA synthetase multienzyme complex"/>
    <property type="evidence" value="ECO:0007669"/>
    <property type="project" value="TreeGrafter"/>
</dbReference>
<dbReference type="GO" id="GO:0005737">
    <property type="term" value="C:cytoplasm"/>
    <property type="evidence" value="ECO:0007669"/>
    <property type="project" value="UniProtKB-SubCell"/>
</dbReference>
<dbReference type="GO" id="GO:0005524">
    <property type="term" value="F:ATP binding"/>
    <property type="evidence" value="ECO:0007669"/>
    <property type="project" value="UniProtKB-UniRule"/>
</dbReference>
<dbReference type="GO" id="GO:0004827">
    <property type="term" value="F:proline-tRNA ligase activity"/>
    <property type="evidence" value="ECO:0007669"/>
    <property type="project" value="UniProtKB-UniRule"/>
</dbReference>
<dbReference type="GO" id="GO:0006433">
    <property type="term" value="P:prolyl-tRNA aminoacylation"/>
    <property type="evidence" value="ECO:0007669"/>
    <property type="project" value="UniProtKB-UniRule"/>
</dbReference>
<dbReference type="CDD" id="cd00778">
    <property type="entry name" value="ProRS_core_arch_euk"/>
    <property type="match status" value="1"/>
</dbReference>
<dbReference type="FunFam" id="3.30.930.10:FF:000037">
    <property type="entry name" value="Proline--tRNA ligase"/>
    <property type="match status" value="1"/>
</dbReference>
<dbReference type="Gene3D" id="3.40.50.800">
    <property type="entry name" value="Anticodon-binding domain"/>
    <property type="match status" value="1"/>
</dbReference>
<dbReference type="Gene3D" id="3.30.930.10">
    <property type="entry name" value="Bira Bifunctional Protein, Domain 2"/>
    <property type="match status" value="1"/>
</dbReference>
<dbReference type="Gene3D" id="3.30.110.30">
    <property type="entry name" value="C-terminal domain of ProRS"/>
    <property type="match status" value="1"/>
</dbReference>
<dbReference type="HAMAP" id="MF_01571">
    <property type="entry name" value="Pro_tRNA_synth_type3"/>
    <property type="match status" value="1"/>
</dbReference>
<dbReference type="InterPro" id="IPR002314">
    <property type="entry name" value="aa-tRNA-synt_IIb"/>
</dbReference>
<dbReference type="InterPro" id="IPR006195">
    <property type="entry name" value="aa-tRNA-synth_II"/>
</dbReference>
<dbReference type="InterPro" id="IPR045864">
    <property type="entry name" value="aa-tRNA-synth_II/BPL/LPL"/>
</dbReference>
<dbReference type="InterPro" id="IPR004154">
    <property type="entry name" value="Anticodon-bd"/>
</dbReference>
<dbReference type="InterPro" id="IPR036621">
    <property type="entry name" value="Anticodon-bd_dom_sf"/>
</dbReference>
<dbReference type="InterPro" id="IPR002316">
    <property type="entry name" value="Pro-tRNA-ligase_IIa"/>
</dbReference>
<dbReference type="InterPro" id="IPR004499">
    <property type="entry name" value="Pro-tRNA-ligase_IIa_arc-type"/>
</dbReference>
<dbReference type="InterPro" id="IPR016061">
    <property type="entry name" value="Pro-tRNA_ligase_II_C"/>
</dbReference>
<dbReference type="InterPro" id="IPR017449">
    <property type="entry name" value="Pro-tRNA_synth_II"/>
</dbReference>
<dbReference type="InterPro" id="IPR033721">
    <property type="entry name" value="ProRS_core_arch_euk"/>
</dbReference>
<dbReference type="NCBIfam" id="TIGR00408">
    <property type="entry name" value="proS_fam_I"/>
    <property type="match status" value="1"/>
</dbReference>
<dbReference type="PANTHER" id="PTHR43382:SF2">
    <property type="entry name" value="BIFUNCTIONAL GLUTAMATE_PROLINE--TRNA LIGASE"/>
    <property type="match status" value="1"/>
</dbReference>
<dbReference type="PANTHER" id="PTHR43382">
    <property type="entry name" value="PROLYL-TRNA SYNTHETASE"/>
    <property type="match status" value="1"/>
</dbReference>
<dbReference type="Pfam" id="PF03129">
    <property type="entry name" value="HGTP_anticodon"/>
    <property type="match status" value="1"/>
</dbReference>
<dbReference type="Pfam" id="PF09180">
    <property type="entry name" value="ProRS-C_1"/>
    <property type="match status" value="1"/>
</dbReference>
<dbReference type="Pfam" id="PF00587">
    <property type="entry name" value="tRNA-synt_2b"/>
    <property type="match status" value="1"/>
</dbReference>
<dbReference type="PRINTS" id="PR01046">
    <property type="entry name" value="TRNASYNTHPRO"/>
</dbReference>
<dbReference type="SMART" id="SM00946">
    <property type="entry name" value="ProRS-C_1"/>
    <property type="match status" value="1"/>
</dbReference>
<dbReference type="SUPFAM" id="SSF64586">
    <property type="entry name" value="C-terminal domain of ProRS"/>
    <property type="match status" value="1"/>
</dbReference>
<dbReference type="SUPFAM" id="SSF52954">
    <property type="entry name" value="Class II aaRS ABD-related"/>
    <property type="match status" value="1"/>
</dbReference>
<dbReference type="SUPFAM" id="SSF55681">
    <property type="entry name" value="Class II aaRS and biotin synthetases"/>
    <property type="match status" value="1"/>
</dbReference>
<dbReference type="PROSITE" id="PS50862">
    <property type="entry name" value="AA_TRNA_LIGASE_II"/>
    <property type="match status" value="1"/>
</dbReference>
<evidence type="ECO:0000255" key="1">
    <source>
        <dbReference type="HAMAP-Rule" id="MF_01571"/>
    </source>
</evidence>
<proteinExistence type="inferred from homology"/>
<comment type="function">
    <text evidence="1">Catalyzes the attachment of proline to tRNA(Pro) in a two-step reaction: proline is first activated by ATP to form Pro-AMP and then transferred to the acceptor end of tRNA(Pro).</text>
</comment>
<comment type="catalytic activity">
    <reaction evidence="1">
        <text>tRNA(Pro) + L-proline + ATP = L-prolyl-tRNA(Pro) + AMP + diphosphate</text>
        <dbReference type="Rhea" id="RHEA:14305"/>
        <dbReference type="Rhea" id="RHEA-COMP:9700"/>
        <dbReference type="Rhea" id="RHEA-COMP:9702"/>
        <dbReference type="ChEBI" id="CHEBI:30616"/>
        <dbReference type="ChEBI" id="CHEBI:33019"/>
        <dbReference type="ChEBI" id="CHEBI:60039"/>
        <dbReference type="ChEBI" id="CHEBI:78442"/>
        <dbReference type="ChEBI" id="CHEBI:78532"/>
        <dbReference type="ChEBI" id="CHEBI:456215"/>
        <dbReference type="EC" id="6.1.1.15"/>
    </reaction>
</comment>
<comment type="subunit">
    <text evidence="1">Homodimer.</text>
</comment>
<comment type="subcellular location">
    <subcellularLocation>
        <location evidence="1">Cytoplasm</location>
    </subcellularLocation>
</comment>
<comment type="domain">
    <text evidence="1">Consists of three domains: the N-terminal catalytic domain, the anticodon-binding domain and the C-terminal extension.</text>
</comment>
<comment type="similarity">
    <text evidence="1">Belongs to the class-II aminoacyl-tRNA synthetase family. ProS type 3 subfamily.</text>
</comment>
<protein>
    <recommendedName>
        <fullName evidence="1">Proline--tRNA ligase</fullName>
        <ecNumber evidence="1">6.1.1.15</ecNumber>
    </recommendedName>
    <alternativeName>
        <fullName evidence="1">Prolyl-tRNA synthetase</fullName>
        <shortName evidence="1">ProRS</shortName>
    </alternativeName>
</protein>
<gene>
    <name evidence="1" type="primary">proS</name>
    <name type="ordered locus">Memar_2042</name>
</gene>
<keyword id="KW-0030">Aminoacyl-tRNA synthetase</keyword>
<keyword id="KW-0067">ATP-binding</keyword>
<keyword id="KW-0963">Cytoplasm</keyword>
<keyword id="KW-0436">Ligase</keyword>
<keyword id="KW-0547">Nucleotide-binding</keyword>
<keyword id="KW-0648">Protein biosynthesis</keyword>
<accession>A3CX68</accession>
<sequence length="477" mass="53180">MEEDTGALPRKENFSEWYNDILWRAEIMDVRYPVKGLYVWYPHGFGIRKRAYGVLRDLMDRDHAETMFPLLIPKTEFMKEAEHIKGFEDEVYWVTHGGRNELDVPLALRPTSETAIYPMYALWIRSHTDLPLRLYQVVNTFRYETKHTRPLIRLREITSFKEAHTVHATREEAAAQVETAIALYREFYDTLRVPVILSRRPAWDKFPGADYTIAADTIMPDGKTLQIGTVHMLGDHFSRTYAITYEDANGEQQYAYQTCYGISERSIAAVVSVHGDDKGLVLPPEVAPLEVVIVPIIVGKRRDEVLASAAALEAELRGAGFAVKLDARDMRPGAKYYHWEMRGVPLRVEVGPRDIDANTVVAVARTGKKTTLDRRGVVEGITSVLAEFGEDLSQAARQAMAARITAAETLEETAEAVKSGVAVVHWCGSQECAEKIEAAVDASIIGSDIRSDLIAVSDGPCVACGGEGTSALVARTY</sequence>